<name>RASF7_HUMAN</name>
<evidence type="ECO:0000255" key="1"/>
<evidence type="ECO:0000255" key="2">
    <source>
        <dbReference type="PROSITE-ProRule" id="PRU00166"/>
    </source>
</evidence>
<evidence type="ECO:0000256" key="3">
    <source>
        <dbReference type="SAM" id="MobiDB-lite"/>
    </source>
</evidence>
<evidence type="ECO:0000269" key="4">
    <source>
    </source>
</evidence>
<evidence type="ECO:0000269" key="5">
    <source>
    </source>
</evidence>
<evidence type="ECO:0000269" key="6">
    <source>
    </source>
</evidence>
<evidence type="ECO:0000303" key="7">
    <source>
    </source>
</evidence>
<evidence type="ECO:0000303" key="8">
    <source>
    </source>
</evidence>
<protein>
    <recommendedName>
        <fullName>Ras association domain-containing protein 7</fullName>
    </recommendedName>
    <alternativeName>
        <fullName>HRAS1-related cluster protein 1</fullName>
    </alternativeName>
</protein>
<keyword id="KW-0025">Alternative splicing</keyword>
<keyword id="KW-0053">Apoptosis</keyword>
<keyword id="KW-0175">Coiled coil</keyword>
<keyword id="KW-0963">Cytoplasm</keyword>
<keyword id="KW-0206">Cytoskeleton</keyword>
<keyword id="KW-1267">Proteomics identification</keyword>
<keyword id="KW-1185">Reference proteome</keyword>
<keyword id="KW-0832">Ubl conjugation</keyword>
<organism>
    <name type="scientific">Homo sapiens</name>
    <name type="common">Human</name>
    <dbReference type="NCBI Taxonomy" id="9606"/>
    <lineage>
        <taxon>Eukaryota</taxon>
        <taxon>Metazoa</taxon>
        <taxon>Chordata</taxon>
        <taxon>Craniata</taxon>
        <taxon>Vertebrata</taxon>
        <taxon>Euteleostomi</taxon>
        <taxon>Mammalia</taxon>
        <taxon>Eutheria</taxon>
        <taxon>Euarchontoglires</taxon>
        <taxon>Primates</taxon>
        <taxon>Haplorrhini</taxon>
        <taxon>Catarrhini</taxon>
        <taxon>Hominidae</taxon>
        <taxon>Homo</taxon>
    </lineage>
</organism>
<feature type="chain" id="PRO_0000097173" description="Ras association domain-containing protein 7">
    <location>
        <begin position="1"/>
        <end position="373"/>
    </location>
</feature>
<feature type="domain" description="Ras-associating" evidence="2">
    <location>
        <begin position="6"/>
        <end position="89"/>
    </location>
</feature>
<feature type="region of interest" description="Disordered" evidence="3">
    <location>
        <begin position="122"/>
        <end position="150"/>
    </location>
</feature>
<feature type="region of interest" description="Disordered" evidence="3">
    <location>
        <begin position="300"/>
        <end position="356"/>
    </location>
</feature>
<feature type="coiled-coil region" evidence="1">
    <location>
        <begin position="175"/>
        <end position="227"/>
    </location>
</feature>
<feature type="coiled-coil region" evidence="1">
    <location>
        <begin position="248"/>
        <end position="297"/>
    </location>
</feature>
<feature type="splice variant" id="VSP_045623" description="In isoform 3." evidence="8">
    <original>GPLPPAREESLLGAPSESHAGAQPRPRGGPHDAELLEVAAAPAPEWCPLAAQPQAL</original>
    <variation>WPP</variation>
    <location>
        <begin position="318"/>
        <end position="373"/>
    </location>
</feature>
<feature type="splice variant" id="VSP_004136" description="In isoform 2." evidence="7">
    <original>GPLPPAREESLLGAPSESHA</original>
    <variation>VGVVLGGGWEVRTWPSPTPS</variation>
    <location>
        <begin position="318"/>
        <end position="337"/>
    </location>
</feature>
<feature type="splice variant" id="VSP_004137" description="In isoform 2." evidence="7">
    <location>
        <begin position="338"/>
        <end position="373"/>
    </location>
</feature>
<feature type="sequence variant" id="VAR_021859" description="In dbSNP:rs2242183." evidence="4">
    <original>P</original>
    <variation>A</variation>
    <location>
        <position position="89"/>
    </location>
</feature>
<feature type="sequence variant" id="VAR_021860" description="In dbSNP:rs2242182.">
    <original>R</original>
    <variation>Q</variation>
    <location>
        <position position="156"/>
    </location>
</feature>
<reference key="1">
    <citation type="journal article" date="1992" name="Genomics">
        <title>The HRAS1 gene cluster: two upstream regions recognizing transcripts and a third encoding a gene with a leucine zipper domain.</title>
        <authorList>
            <person name="Weitzel J.N."/>
            <person name="Kasperczyk A."/>
            <person name="Mohan C."/>
            <person name="Krontiris T.G."/>
        </authorList>
    </citation>
    <scope>NUCLEOTIDE SEQUENCE [MRNA] (ISOFORMS 1 AND 2)</scope>
    <source>
        <tissue>Placenta</tissue>
    </source>
</reference>
<reference key="2">
    <citation type="journal article" date="2006" name="Nature">
        <title>Human chromosome 11 DNA sequence and analysis including novel gene identification.</title>
        <authorList>
            <person name="Taylor T.D."/>
            <person name="Noguchi H."/>
            <person name="Totoki Y."/>
            <person name="Toyoda A."/>
            <person name="Kuroki Y."/>
            <person name="Dewar K."/>
            <person name="Lloyd C."/>
            <person name="Itoh T."/>
            <person name="Takeda T."/>
            <person name="Kim D.-W."/>
            <person name="She X."/>
            <person name="Barlow K.F."/>
            <person name="Bloom T."/>
            <person name="Bruford E."/>
            <person name="Chang J.L."/>
            <person name="Cuomo C.A."/>
            <person name="Eichler E."/>
            <person name="FitzGerald M.G."/>
            <person name="Jaffe D.B."/>
            <person name="LaButti K."/>
            <person name="Nicol R."/>
            <person name="Park H.-S."/>
            <person name="Seaman C."/>
            <person name="Sougnez C."/>
            <person name="Yang X."/>
            <person name="Zimmer A.R."/>
            <person name="Zody M.C."/>
            <person name="Birren B.W."/>
            <person name="Nusbaum C."/>
            <person name="Fujiyama A."/>
            <person name="Hattori M."/>
            <person name="Rogers J."/>
            <person name="Lander E.S."/>
            <person name="Sakaki Y."/>
        </authorList>
    </citation>
    <scope>NUCLEOTIDE SEQUENCE [LARGE SCALE GENOMIC DNA]</scope>
</reference>
<reference key="3">
    <citation type="submission" date="2005-07" db="EMBL/GenBank/DDBJ databases">
        <authorList>
            <person name="Mural R.J."/>
            <person name="Istrail S."/>
            <person name="Sutton G."/>
            <person name="Florea L."/>
            <person name="Halpern A.L."/>
            <person name="Mobarry C.M."/>
            <person name="Lippert R."/>
            <person name="Walenz B."/>
            <person name="Shatkay H."/>
            <person name="Dew I."/>
            <person name="Miller J.R."/>
            <person name="Flanigan M.J."/>
            <person name="Edwards N.J."/>
            <person name="Bolanos R."/>
            <person name="Fasulo D."/>
            <person name="Halldorsson B.V."/>
            <person name="Hannenhalli S."/>
            <person name="Turner R."/>
            <person name="Yooseph S."/>
            <person name="Lu F."/>
            <person name="Nusskern D.R."/>
            <person name="Shue B.C."/>
            <person name="Zheng X.H."/>
            <person name="Zhong F."/>
            <person name="Delcher A.L."/>
            <person name="Huson D.H."/>
            <person name="Kravitz S.A."/>
            <person name="Mouchard L."/>
            <person name="Reinert K."/>
            <person name="Remington K.A."/>
            <person name="Clark A.G."/>
            <person name="Waterman M.S."/>
            <person name="Eichler E.E."/>
            <person name="Adams M.D."/>
            <person name="Hunkapiller M.W."/>
            <person name="Myers E.W."/>
            <person name="Venter J.C."/>
        </authorList>
    </citation>
    <scope>NUCLEOTIDE SEQUENCE [LARGE SCALE GENOMIC DNA]</scope>
</reference>
<reference key="4">
    <citation type="journal article" date="2004" name="Genome Res.">
        <title>The status, quality, and expansion of the NIH full-length cDNA project: the Mammalian Gene Collection (MGC).</title>
        <authorList>
            <consortium name="The MGC Project Team"/>
        </authorList>
    </citation>
    <scope>NUCLEOTIDE SEQUENCE [LARGE SCALE MRNA] (ISOFORMS 1 AND 3)</scope>
    <scope>VARIANT ALA-89</scope>
</reference>
<reference key="5">
    <citation type="journal article" date="2010" name="Biochem. J.">
        <title>Human RASSF7 regulates the microtubule cytoskeleton and is required for spindle formation, Aurora B activation and chromosomal congression during mitosis.</title>
        <authorList>
            <person name="Recino A."/>
            <person name="Sherwood V."/>
            <person name="Flaxman A."/>
            <person name="Cooper W.N."/>
            <person name="Latif F."/>
            <person name="Ward A."/>
            <person name="Chalmers A.D."/>
        </authorList>
    </citation>
    <scope>FUNCTION</scope>
    <scope>SUBCELLULAR LOCATION</scope>
</reference>
<reference key="6">
    <citation type="journal article" date="2011" name="Cell Death Differ.">
        <title>RASSF7 negatively regulates pro-apoptotic JNK signaling by inhibiting the activity of phosphorylated-MKK7.</title>
        <authorList>
            <person name="Takahashi S."/>
            <person name="Ebihara A."/>
            <person name="Kajiho H."/>
            <person name="Kontani K."/>
            <person name="Nishina H."/>
            <person name="Katada T."/>
        </authorList>
    </citation>
    <scope>FUNCTION</scope>
    <scope>INTERACTION WITH MAP2K7 AND NRAS</scope>
</reference>
<proteinExistence type="evidence at protein level"/>
<sequence length="373" mass="39945">MLLGLAAMELKVWVDGIQRVVCGVSEQTTCQEVVIALAQAIGQTGRFVLVQRLREKERQLLPQECPVGAQATCGQFASDVQFVLRRTGPSLAGRPSSDSCPPPERCLIRASLPVKPRAALGCEPRKTLTPEPAPSLSRPGPAAPVTPTPGCCTDLRGLELRVQRNAEELGHEAFWEQELRREQAREREGQARLQALSAATAEHAARLQALDAQARALEAELQLAAEAPGPPSPMASATERLHQDLAVQERQSAEVQGSLALVSRALEAAERALQAQAQELEELNRELRQCNLQQFIQQTGAALPPPPRPDRGPPGTQGPLPPAREESLLGAPSESHAGAQPRPRGGPHDAELLEVAAAPAPEWCPLAAQPQAL</sequence>
<accession>Q02833</accession>
<accession>G5E9N9</accession>
<accession>Q3KP41</accession>
<accession>Q3KP42</accession>
<dbReference type="EMBL" id="M91083">
    <property type="protein sequence ID" value="AAA58667.1"/>
    <property type="molecule type" value="mRNA"/>
</dbReference>
<dbReference type="EMBL" id="AP006284">
    <property type="status" value="NOT_ANNOTATED_CDS"/>
    <property type="molecule type" value="Genomic_DNA"/>
</dbReference>
<dbReference type="EMBL" id="CH471158">
    <property type="protein sequence ID" value="EAX02351.1"/>
    <property type="molecule type" value="Genomic_DNA"/>
</dbReference>
<dbReference type="EMBL" id="BC106921">
    <property type="protein sequence ID" value="AAI06922.1"/>
    <property type="molecule type" value="mRNA"/>
</dbReference>
<dbReference type="EMBL" id="BC106922">
    <property type="protein sequence ID" value="AAI06923.1"/>
    <property type="molecule type" value="mRNA"/>
</dbReference>
<dbReference type="CCDS" id="CCDS44505.1">
    <molecule id="Q02833-3"/>
</dbReference>
<dbReference type="CCDS" id="CCDS44506.1">
    <molecule id="Q02833-2"/>
</dbReference>
<dbReference type="CCDS" id="CCDS7702.1">
    <molecule id="Q02833-1"/>
</dbReference>
<dbReference type="PIR" id="A44478">
    <property type="entry name" value="A44478"/>
</dbReference>
<dbReference type="PIR" id="B44478">
    <property type="entry name" value="B44478"/>
</dbReference>
<dbReference type="RefSeq" id="NP_001137465.1">
    <molecule id="Q02833-2"/>
    <property type="nucleotide sequence ID" value="NM_001143993.2"/>
</dbReference>
<dbReference type="RefSeq" id="NP_001137466.1">
    <molecule id="Q02833-3"/>
    <property type="nucleotide sequence ID" value="NM_001143994.2"/>
</dbReference>
<dbReference type="RefSeq" id="NP_003466.1">
    <molecule id="Q02833-1"/>
    <property type="nucleotide sequence ID" value="NM_003475.4"/>
</dbReference>
<dbReference type="RefSeq" id="XP_016873850.1">
    <property type="nucleotide sequence ID" value="XM_017018361.1"/>
</dbReference>
<dbReference type="RefSeq" id="XP_016873851.1">
    <property type="nucleotide sequence ID" value="XM_017018362.1"/>
</dbReference>
<dbReference type="SMR" id="Q02833"/>
<dbReference type="BioGRID" id="113735">
    <property type="interactions" value="48"/>
</dbReference>
<dbReference type="FunCoup" id="Q02833">
    <property type="interactions" value="85"/>
</dbReference>
<dbReference type="IntAct" id="Q02833">
    <property type="interactions" value="43"/>
</dbReference>
<dbReference type="MINT" id="Q02833"/>
<dbReference type="STRING" id="9606.ENSP00000380713"/>
<dbReference type="GlyGen" id="Q02833">
    <property type="glycosylation" value="1 site"/>
</dbReference>
<dbReference type="iPTMnet" id="Q02833"/>
<dbReference type="PhosphoSitePlus" id="Q02833"/>
<dbReference type="BioMuta" id="RASSF7"/>
<dbReference type="DMDM" id="18202480"/>
<dbReference type="jPOST" id="Q02833"/>
<dbReference type="MassIVE" id="Q02833"/>
<dbReference type="PaxDb" id="9606-ENSP00000380713"/>
<dbReference type="PeptideAtlas" id="Q02833"/>
<dbReference type="ProteomicsDB" id="33997"/>
<dbReference type="ProteomicsDB" id="58129">
    <molecule id="Q02833-1"/>
</dbReference>
<dbReference type="ProteomicsDB" id="58130">
    <molecule id="Q02833-2"/>
</dbReference>
<dbReference type="Pumba" id="Q02833"/>
<dbReference type="Antibodypedia" id="9750">
    <property type="antibodies" value="244 antibodies from 33 providers"/>
</dbReference>
<dbReference type="DNASU" id="8045"/>
<dbReference type="Ensembl" id="ENST00000397582.7">
    <molecule id="Q02833-2"/>
    <property type="protein sequence ID" value="ENSP00000380712.3"/>
    <property type="gene ID" value="ENSG00000099849.15"/>
</dbReference>
<dbReference type="Ensembl" id="ENST00000397583.8">
    <molecule id="Q02833-1"/>
    <property type="protein sequence ID" value="ENSP00000380713.3"/>
    <property type="gene ID" value="ENSG00000099849.15"/>
</dbReference>
<dbReference type="Ensembl" id="ENST00000431809.5">
    <molecule id="Q02833-2"/>
    <property type="protein sequence ID" value="ENSP00000403068.1"/>
    <property type="gene ID" value="ENSG00000099849.15"/>
</dbReference>
<dbReference type="Ensembl" id="ENST00000454668.2">
    <molecule id="Q02833-3"/>
    <property type="protein sequence ID" value="ENSP00000405606.2"/>
    <property type="gene ID" value="ENSG00000099849.15"/>
</dbReference>
<dbReference type="Ensembl" id="ENST00000622905.2">
    <property type="protein sequence ID" value="ENSP00000479652.1"/>
    <property type="gene ID" value="ENSG00000273859.4"/>
</dbReference>
<dbReference type="GeneID" id="8045"/>
<dbReference type="KEGG" id="hsa:8045"/>
<dbReference type="MANE-Select" id="ENST00000397583.8">
    <property type="protein sequence ID" value="ENSP00000380713.3"/>
    <property type="RefSeq nucleotide sequence ID" value="NM_003475.4"/>
    <property type="RefSeq protein sequence ID" value="NP_003466.1"/>
</dbReference>
<dbReference type="UCSC" id="uc001lqb.4">
    <molecule id="Q02833-1"/>
    <property type="organism name" value="human"/>
</dbReference>
<dbReference type="AGR" id="HGNC:1166"/>
<dbReference type="CTD" id="8045"/>
<dbReference type="DisGeNET" id="8045"/>
<dbReference type="GeneCards" id="RASSF7"/>
<dbReference type="HGNC" id="HGNC:1166">
    <property type="gene designation" value="RASSF7"/>
</dbReference>
<dbReference type="HPA" id="ENSG00000099849">
    <property type="expression patterns" value="Tissue enhanced (kidney)"/>
</dbReference>
<dbReference type="MIM" id="143023">
    <property type="type" value="gene"/>
</dbReference>
<dbReference type="neXtProt" id="NX_Q02833"/>
<dbReference type="OpenTargets" id="ENSG00000099849"/>
<dbReference type="PharmGKB" id="PA25480"/>
<dbReference type="VEuPathDB" id="HostDB:ENSG00000099849"/>
<dbReference type="eggNOG" id="KOG1574">
    <property type="taxonomic scope" value="Eukaryota"/>
</dbReference>
<dbReference type="GeneTree" id="ENSGT00950000182839"/>
<dbReference type="HOGENOM" id="CLU_031151_0_1_1"/>
<dbReference type="InParanoid" id="Q02833"/>
<dbReference type="OMA" id="MSRWRHQ"/>
<dbReference type="OrthoDB" id="10051571at2759"/>
<dbReference type="PAN-GO" id="Q02833">
    <property type="GO annotations" value="0 GO annotations based on evolutionary models"/>
</dbReference>
<dbReference type="PhylomeDB" id="Q02833"/>
<dbReference type="TreeFam" id="TF318385"/>
<dbReference type="PathwayCommons" id="Q02833"/>
<dbReference type="SignaLink" id="Q02833"/>
<dbReference type="BioGRID-ORCS" id="8045">
    <property type="hits" value="10 hits in 1146 CRISPR screens"/>
</dbReference>
<dbReference type="ChiTaRS" id="RASSF7">
    <property type="organism name" value="human"/>
</dbReference>
<dbReference type="GenomeRNAi" id="8045"/>
<dbReference type="Pharos" id="Q02833">
    <property type="development level" value="Tbio"/>
</dbReference>
<dbReference type="PRO" id="PR:Q02833"/>
<dbReference type="Proteomes" id="UP000005640">
    <property type="component" value="Chromosome 11"/>
</dbReference>
<dbReference type="RNAct" id="Q02833">
    <property type="molecule type" value="protein"/>
</dbReference>
<dbReference type="Bgee" id="ENSG00000099849">
    <property type="expression patterns" value="Expressed in right uterine tube and 93 other cell types or tissues"/>
</dbReference>
<dbReference type="ExpressionAtlas" id="Q02833">
    <property type="expression patterns" value="baseline and differential"/>
</dbReference>
<dbReference type="GO" id="GO:0034451">
    <property type="term" value="C:centriolar satellite"/>
    <property type="evidence" value="ECO:0000314"/>
    <property type="project" value="HPA"/>
</dbReference>
<dbReference type="GO" id="GO:0005737">
    <property type="term" value="C:cytoplasm"/>
    <property type="evidence" value="ECO:0007669"/>
    <property type="project" value="UniProtKB-KW"/>
</dbReference>
<dbReference type="GO" id="GO:0006915">
    <property type="term" value="P:apoptotic process"/>
    <property type="evidence" value="ECO:0007669"/>
    <property type="project" value="UniProtKB-KW"/>
</dbReference>
<dbReference type="GO" id="GO:0007165">
    <property type="term" value="P:signal transduction"/>
    <property type="evidence" value="ECO:0007669"/>
    <property type="project" value="InterPro"/>
</dbReference>
<dbReference type="CDD" id="cd16135">
    <property type="entry name" value="RA_RASSF7"/>
    <property type="match status" value="1"/>
</dbReference>
<dbReference type="FunFam" id="3.10.20.90:FF:000132">
    <property type="entry name" value="Ras association domain-containing protein 7"/>
    <property type="match status" value="1"/>
</dbReference>
<dbReference type="Gene3D" id="3.10.20.90">
    <property type="entry name" value="Phosphatidylinositol 3-kinase Catalytic Subunit, Chain A, domain 1"/>
    <property type="match status" value="1"/>
</dbReference>
<dbReference type="InterPro" id="IPR033593">
    <property type="entry name" value="N-RASSF"/>
</dbReference>
<dbReference type="InterPro" id="IPR000159">
    <property type="entry name" value="RA_dom"/>
</dbReference>
<dbReference type="InterPro" id="IPR033631">
    <property type="entry name" value="RASSF7_RA"/>
</dbReference>
<dbReference type="InterPro" id="IPR029071">
    <property type="entry name" value="Ubiquitin-like_domsf"/>
</dbReference>
<dbReference type="PANTHER" id="PTHR15286:SF11">
    <property type="entry name" value="RAS ASSOCIATION DOMAIN-CONTAINING PROTEIN 7"/>
    <property type="match status" value="1"/>
</dbReference>
<dbReference type="PANTHER" id="PTHR15286">
    <property type="entry name" value="RAS-ASSOCIATING DOMAIN CONTAINING PROTEIN"/>
    <property type="match status" value="1"/>
</dbReference>
<dbReference type="Pfam" id="PF00788">
    <property type="entry name" value="RA"/>
    <property type="match status" value="1"/>
</dbReference>
<dbReference type="SMART" id="SM00314">
    <property type="entry name" value="RA"/>
    <property type="match status" value="1"/>
</dbReference>
<dbReference type="SUPFAM" id="SSF54236">
    <property type="entry name" value="Ubiquitin-like"/>
    <property type="match status" value="1"/>
</dbReference>
<dbReference type="PROSITE" id="PS50200">
    <property type="entry name" value="RA"/>
    <property type="match status" value="1"/>
</dbReference>
<comment type="function">
    <text evidence="5 6">Negatively regulates stress-induced JNK activation and apoptosis by promoting MAP2K7 phosphorylation and inhibiting its ability to activate JNK. Following prolonged stress, anti-apoptotic effect stops because of degradation of RASSF7 protein via the ubiquitin-proteasome pathway. Required for the activation of AURKB and chromosomal congression during mitosis where it stimulates microtubule polymerization.</text>
</comment>
<comment type="subunit">
    <text evidence="6">Interacts with MAP2K7 and GTP-bound NRAS.</text>
</comment>
<comment type="interaction">
    <interactant intactId="EBI-929013">
        <id>Q02833</id>
    </interactant>
    <interactant intactId="EBI-713635">
        <id>O43639</id>
        <label>NCK2</label>
    </interactant>
    <organismsDiffer>false</organismsDiffer>
    <experiments>6</experiments>
</comment>
<comment type="interaction">
    <interactant intactId="EBI-929013">
        <id>Q02833</id>
    </interactant>
    <interactant intactId="EBI-490676">
        <id>O95721</id>
        <label>SNAP29</label>
    </interactant>
    <organismsDiffer>false</organismsDiffer>
    <experiments>4</experiments>
</comment>
<comment type="subcellular location">
    <subcellularLocation>
        <location evidence="5">Cytoplasm</location>
        <location evidence="5">Cytoskeleton</location>
        <location evidence="5">Microtubule organizing center</location>
        <location evidence="5">Centrosome</location>
    </subcellularLocation>
    <text>Colocalizes with gamma-tubulin.</text>
</comment>
<comment type="alternative products">
    <event type="alternative splicing"/>
    <isoform>
        <id>Q02833-1</id>
        <name>1</name>
        <sequence type="displayed"/>
    </isoform>
    <isoform>
        <id>Q02833-2</id>
        <name>2</name>
        <sequence type="described" ref="VSP_004136 VSP_004137"/>
    </isoform>
    <isoform>
        <id>Q02833-3</id>
        <name>3</name>
        <sequence type="described" ref="VSP_045623"/>
    </isoform>
</comment>
<comment type="PTM">
    <text>Polyubiquitinated and degraded by the proteasome upon prolonged stress stimuli.</text>
</comment>
<gene>
    <name type="primary">RASSF7</name>
    <name type="synonym">C11orf13</name>
    <name type="synonym">HRC1</name>
</gene>